<feature type="chain" id="PRO_0000428106" description="Uncharacterized PPE family protein PPE63">
    <location>
        <begin position="1"/>
        <end position="479"/>
    </location>
</feature>
<feature type="domain" description="PE-PPE" evidence="1">
    <location>
        <begin position="240"/>
        <end position="462"/>
    </location>
</feature>
<feature type="region of interest" description="Disordered" evidence="2">
    <location>
        <begin position="180"/>
        <end position="203"/>
    </location>
</feature>
<feature type="compositionally biased region" description="Polar residues" evidence="2">
    <location>
        <begin position="187"/>
        <end position="202"/>
    </location>
</feature>
<accession>P9WHX4</accession>
<accession>L0TFR2</accession>
<accession>Q6MWW1</accession>
<accession>Q7D5B9</accession>
<reference key="1">
    <citation type="journal article" date="2002" name="J. Bacteriol.">
        <title>Whole-genome comparison of Mycobacterium tuberculosis clinical and laboratory strains.</title>
        <authorList>
            <person name="Fleischmann R.D."/>
            <person name="Alland D."/>
            <person name="Eisen J.A."/>
            <person name="Carpenter L."/>
            <person name="White O."/>
            <person name="Peterson J.D."/>
            <person name="DeBoy R.T."/>
            <person name="Dodson R.J."/>
            <person name="Gwinn M.L."/>
            <person name="Haft D.H."/>
            <person name="Hickey E.K."/>
            <person name="Kolonay J.F."/>
            <person name="Nelson W.C."/>
            <person name="Umayam L.A."/>
            <person name="Ermolaeva M.D."/>
            <person name="Salzberg S.L."/>
            <person name="Delcher A."/>
            <person name="Utterback T.R."/>
            <person name="Weidman J.F."/>
            <person name="Khouri H.M."/>
            <person name="Gill J."/>
            <person name="Mikula A."/>
            <person name="Bishai W."/>
            <person name="Jacobs W.R. Jr."/>
            <person name="Venter J.C."/>
            <person name="Fraser C.M."/>
        </authorList>
    </citation>
    <scope>NUCLEOTIDE SEQUENCE [LARGE SCALE GENOMIC DNA]</scope>
    <source>
        <strain>CDC 1551 / Oshkosh</strain>
    </source>
</reference>
<proteinExistence type="inferred from homology"/>
<sequence length="479" mass="49970">MADFLTLSPEVNSARMYAGGGPGSLSAAAAAWDELAAELWLAAASFESVCSGLADRWWQGPSSRMMAAQAARHTGWLAAAATQAEGAASQAQTMALAYEAAFAATVHPALVAANRALVAWLAGSNVFGQNTPAIAAAEAIYEQMWAQDVVAMLNYHAVASAVGARLRPWQQLLHELPRRLGGEHSDSTNTELANPSSTTTRITVPGASPVHAATLLPFIGRLLAARYAELNTAIGTNWFPGTTPEVVSYPATIGVLSGSLGAVDANQSIAIGQQMLHNEILAATASGQPVTVAGLSMGSMVIDRELAYLAIDPNAPPSSALTFVELAGPERGLAQTYLPVGTTIPIAGYTVGNAPESQYNTSVVYSQYDIWADPPDRPWNLLAGANALMGAAYFHDLTAYAAPQQGIEIAAVTSSLGGTTTTYMIPSPTLPLLLPLKQIGVPDWIVGGLNNVLKPLVDAGYSQYAPTAGPYFSHGNLVW</sequence>
<dbReference type="EMBL" id="AE000516">
    <property type="protein sequence ID" value="AAK48002.1"/>
    <property type="molecule type" value="Genomic_DNA"/>
</dbReference>
<dbReference type="PIR" id="D70676">
    <property type="entry name" value="D70676"/>
</dbReference>
<dbReference type="RefSeq" id="WP_003900090.1">
    <property type="nucleotide sequence ID" value="NZ_KK341227.1"/>
</dbReference>
<dbReference type="SMR" id="P9WHX4"/>
<dbReference type="ESTHER" id="myctu-ppe63">
    <property type="family name" value="PE-PPE"/>
</dbReference>
<dbReference type="KEGG" id="mtc:MT3643"/>
<dbReference type="PATRIC" id="fig|83331.31.peg.3924"/>
<dbReference type="HOGENOM" id="CLU_028265_3_0_11"/>
<dbReference type="Proteomes" id="UP000001020">
    <property type="component" value="Chromosome"/>
</dbReference>
<dbReference type="GO" id="GO:0052572">
    <property type="term" value="P:response to host immune response"/>
    <property type="evidence" value="ECO:0007669"/>
    <property type="project" value="TreeGrafter"/>
</dbReference>
<dbReference type="FunFam" id="1.20.1260.20:FF:000001">
    <property type="entry name" value="PPE family protein PPE41"/>
    <property type="match status" value="1"/>
</dbReference>
<dbReference type="Gene3D" id="3.40.50.1820">
    <property type="entry name" value="alpha/beta hydrolase"/>
    <property type="match status" value="1"/>
</dbReference>
<dbReference type="Gene3D" id="1.20.1260.20">
    <property type="entry name" value="PPE superfamily"/>
    <property type="match status" value="1"/>
</dbReference>
<dbReference type="InterPro" id="IPR029058">
    <property type="entry name" value="AB_hydrolase_fold"/>
</dbReference>
<dbReference type="InterPro" id="IPR013228">
    <property type="entry name" value="PE-PPE_C"/>
</dbReference>
<dbReference type="InterPro" id="IPR000030">
    <property type="entry name" value="PPE_dom"/>
</dbReference>
<dbReference type="InterPro" id="IPR038332">
    <property type="entry name" value="PPE_sf"/>
</dbReference>
<dbReference type="PANTHER" id="PTHR46766">
    <property type="entry name" value="GLUTAMINE-RICH PROTEIN 2"/>
    <property type="match status" value="1"/>
</dbReference>
<dbReference type="PANTHER" id="PTHR46766:SF1">
    <property type="entry name" value="GLUTAMINE-RICH PROTEIN 2"/>
    <property type="match status" value="1"/>
</dbReference>
<dbReference type="Pfam" id="PF08237">
    <property type="entry name" value="PE-PPE"/>
    <property type="match status" value="1"/>
</dbReference>
<dbReference type="Pfam" id="PF00823">
    <property type="entry name" value="PPE"/>
    <property type="match status" value="1"/>
</dbReference>
<dbReference type="SUPFAM" id="SSF140459">
    <property type="entry name" value="PE/PPE dimer-like"/>
    <property type="match status" value="1"/>
</dbReference>
<name>PPE63_MYCTO</name>
<evidence type="ECO:0000255" key="1"/>
<evidence type="ECO:0000256" key="2">
    <source>
        <dbReference type="SAM" id="MobiDB-lite"/>
    </source>
</evidence>
<evidence type="ECO:0000305" key="3"/>
<organism>
    <name type="scientific">Mycobacterium tuberculosis (strain CDC 1551 / Oshkosh)</name>
    <dbReference type="NCBI Taxonomy" id="83331"/>
    <lineage>
        <taxon>Bacteria</taxon>
        <taxon>Bacillati</taxon>
        <taxon>Actinomycetota</taxon>
        <taxon>Actinomycetes</taxon>
        <taxon>Mycobacteriales</taxon>
        <taxon>Mycobacteriaceae</taxon>
        <taxon>Mycobacterium</taxon>
        <taxon>Mycobacterium tuberculosis complex</taxon>
    </lineage>
</organism>
<gene>
    <name type="primary">PPE63</name>
    <name type="ordered locus">MT3643</name>
</gene>
<comment type="similarity">
    <text evidence="3">Belongs to the mycobacterial PPE family.</text>
</comment>
<keyword id="KW-1185">Reference proteome</keyword>
<protein>
    <recommendedName>
        <fullName>Uncharacterized PPE family protein PPE63</fullName>
    </recommendedName>
</protein>